<evidence type="ECO:0000255" key="1">
    <source>
        <dbReference type="PROSITE-ProRule" id="PRU00042"/>
    </source>
</evidence>
<evidence type="ECO:0000269" key="2">
    <source>
    </source>
</evidence>
<evidence type="ECO:0000269" key="3">
    <source>
    </source>
</evidence>
<evidence type="ECO:0000269" key="4">
    <source>
    </source>
</evidence>
<evidence type="ECO:0000269" key="5">
    <source>
    </source>
</evidence>
<evidence type="ECO:0000269" key="6">
    <source>
    </source>
</evidence>
<evidence type="ECO:0000269" key="7">
    <source>
    </source>
</evidence>
<evidence type="ECO:0000269" key="8">
    <source>
    </source>
</evidence>
<evidence type="ECO:0000269" key="9">
    <source>
    </source>
</evidence>
<evidence type="ECO:0000305" key="10"/>
<dbReference type="EMBL" id="X98673">
    <property type="protein sequence ID" value="CAA67231.1"/>
    <property type="molecule type" value="mRNA"/>
</dbReference>
<dbReference type="EMBL" id="X98674">
    <property type="protein sequence ID" value="CAA67232.1"/>
    <property type="molecule type" value="Genomic_DNA"/>
</dbReference>
<dbReference type="EMBL" id="AB015475">
    <property type="protein sequence ID" value="BAB08349.1"/>
    <property type="molecule type" value="Genomic_DNA"/>
</dbReference>
<dbReference type="EMBL" id="CP002688">
    <property type="protein sequence ID" value="AED97237.1"/>
    <property type="molecule type" value="Genomic_DNA"/>
</dbReference>
<dbReference type="EMBL" id="AY050915">
    <property type="protein sequence ID" value="AAK93592.1"/>
    <property type="molecule type" value="mRNA"/>
</dbReference>
<dbReference type="EMBL" id="AY133818">
    <property type="protein sequence ID" value="AAM91752.1"/>
    <property type="molecule type" value="mRNA"/>
</dbReference>
<dbReference type="EMBL" id="AY088036">
    <property type="protein sequence ID" value="AAM65582.1"/>
    <property type="molecule type" value="mRNA"/>
</dbReference>
<dbReference type="RefSeq" id="NP_200790.1">
    <property type="nucleotide sequence ID" value="NM_125374.3"/>
</dbReference>
<dbReference type="BioGRID" id="21347">
    <property type="interactions" value="2"/>
</dbReference>
<dbReference type="FunCoup" id="Q42410">
    <property type="interactions" value="2"/>
</dbReference>
<dbReference type="IntAct" id="Q42410">
    <property type="interactions" value="1"/>
</dbReference>
<dbReference type="STRING" id="3702.Q42410"/>
<dbReference type="PaxDb" id="3702-AT5G59820.1"/>
<dbReference type="ProteomicsDB" id="242346"/>
<dbReference type="DNASU" id="836103"/>
<dbReference type="EnsemblPlants" id="AT5G59820.1">
    <property type="protein sequence ID" value="AT5G59820.1"/>
    <property type="gene ID" value="AT5G59820"/>
</dbReference>
<dbReference type="GeneID" id="836103"/>
<dbReference type="Gramene" id="AT5G59820.1">
    <property type="protein sequence ID" value="AT5G59820.1"/>
    <property type="gene ID" value="AT5G59820"/>
</dbReference>
<dbReference type="KEGG" id="ath:AT5G59820"/>
<dbReference type="Araport" id="AT5G59820"/>
<dbReference type="TAIR" id="AT5G59820">
    <property type="gene designation" value="RHL41"/>
</dbReference>
<dbReference type="eggNOG" id="KOG1721">
    <property type="taxonomic scope" value="Eukaryota"/>
</dbReference>
<dbReference type="HOGENOM" id="CLU_059471_3_0_1"/>
<dbReference type="InParanoid" id="Q42410"/>
<dbReference type="OMA" id="ARVNCLM"/>
<dbReference type="OrthoDB" id="9411774at2759"/>
<dbReference type="PhylomeDB" id="Q42410"/>
<dbReference type="PRO" id="PR:Q42410"/>
<dbReference type="Proteomes" id="UP000006548">
    <property type="component" value="Chromosome 5"/>
</dbReference>
<dbReference type="ExpressionAtlas" id="Q42410">
    <property type="expression patterns" value="baseline and differential"/>
</dbReference>
<dbReference type="GO" id="GO:0005634">
    <property type="term" value="C:nucleus"/>
    <property type="evidence" value="ECO:0007669"/>
    <property type="project" value="UniProtKB-SubCell"/>
</dbReference>
<dbReference type="GO" id="GO:0003700">
    <property type="term" value="F:DNA-binding transcription factor activity"/>
    <property type="evidence" value="ECO:0000250"/>
    <property type="project" value="TAIR"/>
</dbReference>
<dbReference type="GO" id="GO:0000976">
    <property type="term" value="F:transcription cis-regulatory region binding"/>
    <property type="evidence" value="ECO:0000353"/>
    <property type="project" value="TAIR"/>
</dbReference>
<dbReference type="GO" id="GO:0008270">
    <property type="term" value="F:zinc ion binding"/>
    <property type="evidence" value="ECO:0007669"/>
    <property type="project" value="UniProtKB-KW"/>
</dbReference>
<dbReference type="GO" id="GO:0071456">
    <property type="term" value="P:cellular response to hypoxia"/>
    <property type="evidence" value="ECO:0007007"/>
    <property type="project" value="TAIR"/>
</dbReference>
<dbReference type="GO" id="GO:0009631">
    <property type="term" value="P:cold acclimation"/>
    <property type="evidence" value="ECO:0000315"/>
    <property type="project" value="TAIR"/>
</dbReference>
<dbReference type="GO" id="GO:0042538">
    <property type="term" value="P:hyperosmotic salinity response"/>
    <property type="evidence" value="ECO:0000315"/>
    <property type="project" value="TAIR"/>
</dbReference>
<dbReference type="GO" id="GO:0009643">
    <property type="term" value="P:photosynthetic acclimation"/>
    <property type="evidence" value="ECO:0000315"/>
    <property type="project" value="TAIR"/>
</dbReference>
<dbReference type="GO" id="GO:0010200">
    <property type="term" value="P:response to chitin"/>
    <property type="evidence" value="ECO:0000270"/>
    <property type="project" value="TAIR"/>
</dbReference>
<dbReference type="GO" id="GO:0009409">
    <property type="term" value="P:response to cold"/>
    <property type="evidence" value="ECO:0000270"/>
    <property type="project" value="TAIR"/>
</dbReference>
<dbReference type="GO" id="GO:0009408">
    <property type="term" value="P:response to heat"/>
    <property type="evidence" value="ECO:0000315"/>
    <property type="project" value="TAIR"/>
</dbReference>
<dbReference type="GO" id="GO:0009416">
    <property type="term" value="P:response to light stimulus"/>
    <property type="evidence" value="ECO:0000315"/>
    <property type="project" value="TAIR"/>
</dbReference>
<dbReference type="GO" id="GO:0006979">
    <property type="term" value="P:response to oxidative stress"/>
    <property type="evidence" value="ECO:0000315"/>
    <property type="project" value="TAIR"/>
</dbReference>
<dbReference type="GO" id="GO:0010224">
    <property type="term" value="P:response to UV-B"/>
    <property type="evidence" value="ECO:0000270"/>
    <property type="project" value="TAIR"/>
</dbReference>
<dbReference type="GO" id="GO:0009611">
    <property type="term" value="P:response to wounding"/>
    <property type="evidence" value="ECO:0000315"/>
    <property type="project" value="TAIR"/>
</dbReference>
<dbReference type="Gene3D" id="3.30.160.60">
    <property type="entry name" value="Classic Zinc Finger"/>
    <property type="match status" value="1"/>
</dbReference>
<dbReference type="InterPro" id="IPR036236">
    <property type="entry name" value="Znf_C2H2_sf"/>
</dbReference>
<dbReference type="InterPro" id="IPR013087">
    <property type="entry name" value="Znf_C2H2_type"/>
</dbReference>
<dbReference type="PANTHER" id="PTHR26374:SF384">
    <property type="entry name" value="ZINC FINGER PROTEIN ZAT12"/>
    <property type="match status" value="1"/>
</dbReference>
<dbReference type="PANTHER" id="PTHR26374">
    <property type="entry name" value="ZINC FINGER PROTEIN ZAT5"/>
    <property type="match status" value="1"/>
</dbReference>
<dbReference type="Pfam" id="PF13912">
    <property type="entry name" value="zf-C2H2_6"/>
    <property type="match status" value="2"/>
</dbReference>
<dbReference type="SMART" id="SM00355">
    <property type="entry name" value="ZnF_C2H2"/>
    <property type="match status" value="2"/>
</dbReference>
<dbReference type="SUPFAM" id="SSF57667">
    <property type="entry name" value="beta-beta-alpha zinc fingers"/>
    <property type="match status" value="1"/>
</dbReference>
<dbReference type="PROSITE" id="PS00028">
    <property type="entry name" value="ZINC_FINGER_C2H2_1"/>
    <property type="match status" value="2"/>
</dbReference>
<dbReference type="PROSITE" id="PS50157">
    <property type="entry name" value="ZINC_FINGER_C2H2_2"/>
    <property type="match status" value="2"/>
</dbReference>
<gene>
    <name type="primary">ZAT12</name>
    <name type="synonym">RHL41</name>
    <name type="ordered locus">At5g59820</name>
    <name type="ORF">MMN10.11</name>
</gene>
<sequence>MVAISEIKSTVDVTAANCLMLLSRVGQENVDGGDQKRVFTCKTCLKQFHSFQALGGHRASHKKPNNDALSSGLMKKVKTSSHPCPICGVEFPMGQALGGHMRRHRNESGAAGGALVTRALLPEPTVTTLKKSSSGKRVACLDLSLGMVDNLNLKLELGRTVY</sequence>
<organism>
    <name type="scientific">Arabidopsis thaliana</name>
    <name type="common">Mouse-ear cress</name>
    <dbReference type="NCBI Taxonomy" id="3702"/>
    <lineage>
        <taxon>Eukaryota</taxon>
        <taxon>Viridiplantae</taxon>
        <taxon>Streptophyta</taxon>
        <taxon>Embryophyta</taxon>
        <taxon>Tracheophyta</taxon>
        <taxon>Spermatophyta</taxon>
        <taxon>Magnoliopsida</taxon>
        <taxon>eudicotyledons</taxon>
        <taxon>Gunneridae</taxon>
        <taxon>Pentapetalae</taxon>
        <taxon>rosids</taxon>
        <taxon>malvids</taxon>
        <taxon>Brassicales</taxon>
        <taxon>Brassicaceae</taxon>
        <taxon>Camelineae</taxon>
        <taxon>Arabidopsis</taxon>
    </lineage>
</organism>
<reference key="1">
    <citation type="journal article" date="1997" name="Plant Mol. Biol.">
        <title>Isolation and characterisation of a diverse family of Arabidopsis two and three-fingered protein genes and cDNA's.</title>
        <authorList>
            <person name="Meissner R."/>
            <person name="Michael A.J."/>
        </authorList>
    </citation>
    <scope>NUCLEOTIDE SEQUENCE [GENOMIC DNA / MRNA]</scope>
    <scope>TISSUE SPECIFICITY</scope>
    <source>
        <strain>cv. Columbia</strain>
    </source>
</reference>
<reference key="2">
    <citation type="journal article" date="1998" name="DNA Res.">
        <title>Structural analysis of Arabidopsis thaliana chromosome 5. VII. Sequence features of the regions of 1,013,767 bp covered by sixteen physically assigned P1 and TAC clones.</title>
        <authorList>
            <person name="Nakamura Y."/>
            <person name="Sato S."/>
            <person name="Asamizu E."/>
            <person name="Kaneko T."/>
            <person name="Kotani H."/>
            <person name="Miyajima N."/>
            <person name="Tabata S."/>
        </authorList>
    </citation>
    <scope>NUCLEOTIDE SEQUENCE [LARGE SCALE GENOMIC DNA]</scope>
    <source>
        <strain>cv. Columbia</strain>
    </source>
</reference>
<reference key="3">
    <citation type="journal article" date="2017" name="Plant J.">
        <title>Araport11: a complete reannotation of the Arabidopsis thaliana reference genome.</title>
        <authorList>
            <person name="Cheng C.Y."/>
            <person name="Krishnakumar V."/>
            <person name="Chan A.P."/>
            <person name="Thibaud-Nissen F."/>
            <person name="Schobel S."/>
            <person name="Town C.D."/>
        </authorList>
    </citation>
    <scope>GENOME REANNOTATION</scope>
    <source>
        <strain>cv. Columbia</strain>
    </source>
</reference>
<reference key="4">
    <citation type="journal article" date="2003" name="Science">
        <title>Empirical analysis of transcriptional activity in the Arabidopsis genome.</title>
        <authorList>
            <person name="Yamada K."/>
            <person name="Lim J."/>
            <person name="Dale J.M."/>
            <person name="Chen H."/>
            <person name="Shinn P."/>
            <person name="Palm C.J."/>
            <person name="Southwick A.M."/>
            <person name="Wu H.C."/>
            <person name="Kim C.J."/>
            <person name="Nguyen M."/>
            <person name="Pham P.K."/>
            <person name="Cheuk R.F."/>
            <person name="Karlin-Newmann G."/>
            <person name="Liu S.X."/>
            <person name="Lam B."/>
            <person name="Sakano H."/>
            <person name="Wu T."/>
            <person name="Yu G."/>
            <person name="Miranda M."/>
            <person name="Quach H.L."/>
            <person name="Tripp M."/>
            <person name="Chang C.H."/>
            <person name="Lee J.M."/>
            <person name="Toriumi M.J."/>
            <person name="Chan M.M."/>
            <person name="Tang C.C."/>
            <person name="Onodera C.S."/>
            <person name="Deng J.M."/>
            <person name="Akiyama K."/>
            <person name="Ansari Y."/>
            <person name="Arakawa T."/>
            <person name="Banh J."/>
            <person name="Banno F."/>
            <person name="Bowser L."/>
            <person name="Brooks S.Y."/>
            <person name="Carninci P."/>
            <person name="Chao Q."/>
            <person name="Choy N."/>
            <person name="Enju A."/>
            <person name="Goldsmith A.D."/>
            <person name="Gurjal M."/>
            <person name="Hansen N.F."/>
            <person name="Hayashizaki Y."/>
            <person name="Johnson-Hopson C."/>
            <person name="Hsuan V.W."/>
            <person name="Iida K."/>
            <person name="Karnes M."/>
            <person name="Khan S."/>
            <person name="Koesema E."/>
            <person name="Ishida J."/>
            <person name="Jiang P.X."/>
            <person name="Jones T."/>
            <person name="Kawai J."/>
            <person name="Kamiya A."/>
            <person name="Meyers C."/>
            <person name="Nakajima M."/>
            <person name="Narusaka M."/>
            <person name="Seki M."/>
            <person name="Sakurai T."/>
            <person name="Satou M."/>
            <person name="Tamse R."/>
            <person name="Vaysberg M."/>
            <person name="Wallender E.K."/>
            <person name="Wong C."/>
            <person name="Yamamura Y."/>
            <person name="Yuan S."/>
            <person name="Shinozaki K."/>
            <person name="Davis R.W."/>
            <person name="Theologis A."/>
            <person name="Ecker J.R."/>
        </authorList>
    </citation>
    <scope>NUCLEOTIDE SEQUENCE [LARGE SCALE MRNA]</scope>
    <source>
        <strain>cv. Columbia</strain>
    </source>
</reference>
<reference key="5">
    <citation type="submission" date="2002-03" db="EMBL/GenBank/DDBJ databases">
        <title>Full-length cDNA from Arabidopsis thaliana.</title>
        <authorList>
            <person name="Brover V.V."/>
            <person name="Troukhan M.E."/>
            <person name="Alexandrov N.A."/>
            <person name="Lu Y.-P."/>
            <person name="Flavell R.B."/>
            <person name="Feldmann K.A."/>
        </authorList>
    </citation>
    <scope>NUCLEOTIDE SEQUENCE [LARGE SCALE MRNA]</scope>
</reference>
<reference key="6">
    <citation type="journal article" date="2000" name="Plant J.">
        <title>A zinc finger protein RHL41 mediates the light acclimatization response in Arabidopsis.</title>
        <authorList>
            <person name="Iida A."/>
            <person name="Kazuoka T."/>
            <person name="Torikai S."/>
            <person name="Kikuchi H."/>
            <person name="Oeda K."/>
        </authorList>
    </citation>
    <scope>FUNCTION</scope>
</reference>
<reference key="7">
    <citation type="journal article" date="2002" name="Plant Cell">
        <title>Expression profile analysis of the low-oxygen response in Arabidopsis root cultures.</title>
        <authorList>
            <person name="Klok E.J."/>
            <person name="Wilson I.W."/>
            <person name="Wilson D."/>
            <person name="Chapman S.C."/>
            <person name="Ewing R.M."/>
            <person name="Somerville S.C."/>
            <person name="Peacock W.J."/>
            <person name="Dolferus R."/>
            <person name="Dennis E.S."/>
        </authorList>
    </citation>
    <scope>INDUCTION</scope>
</reference>
<reference key="8">
    <citation type="journal article" date="2004" name="J. Biol. Chem.">
        <title>The zinc finger protein Zat12 is required for cytosolic ascorbate peroxidase 1 expression during oxidative stress in Arabidopsis.</title>
        <authorList>
            <person name="Rizhsky L."/>
            <person name="Davletova S."/>
            <person name="Liang H."/>
            <person name="Mittler R."/>
        </authorList>
    </citation>
    <scope>FUNCTION</scope>
    <scope>INDUCTION</scope>
    <scope>DISRUPTION PHENOTYPE</scope>
</reference>
<reference key="9">
    <citation type="journal article" date="2005" name="Plant J.">
        <title>Roles of the CBF2 and ZAT12 transcription factors in configuring the low temperature transcriptome of Arabidopsis.</title>
        <authorList>
            <person name="Vogel J.T."/>
            <person name="Zarka D.G."/>
            <person name="Van Buskirk H.A."/>
            <person name="Fowler S.G."/>
            <person name="Thomashow M.F."/>
        </authorList>
    </citation>
    <scope>FUNCTION</scope>
    <scope>INDUCTION</scope>
</reference>
<reference key="10">
    <citation type="journal article" date="2005" name="Plant Physiol.">
        <title>The zinc-finger protein Zat12 plays a central role in reactive oxygen and abiotic stress signaling in Arabidopsis.</title>
        <authorList>
            <person name="Davletova S."/>
            <person name="Schlauch K."/>
            <person name="Coutu J."/>
            <person name="Mittler R."/>
        </authorList>
    </citation>
    <scope>FUNCTION</scope>
    <scope>INDUCTION</scope>
    <scope>DISRUPTION PHENOTYPE</scope>
</reference>
<reference key="11">
    <citation type="journal article" date="2008" name="J. Biol. Chem.">
        <title>The transcriptional co-activator MBF1c is a key regulator of thermotolerance in Arabidopsis thaliana.</title>
        <authorList>
            <person name="Suzuki N."/>
            <person name="Bajad S."/>
            <person name="Shuman J."/>
            <person name="Shulaev V."/>
            <person name="Mittler R."/>
        </authorList>
    </citation>
    <scope>INDUCTION BY HEAT STRESS</scope>
</reference>
<reference key="12">
    <citation type="journal article" date="2009" name="J. Plant Physiol.">
        <title>Spermine signaling plays a significant role in the defense response of Arabidopsis thaliana to cucumber mosaic virus.</title>
        <authorList>
            <person name="Mitsuya Y."/>
            <person name="Takahashi Y."/>
            <person name="Berberich T."/>
            <person name="Miyazaki A."/>
            <person name="Matsumura H."/>
            <person name="Takahashi H."/>
            <person name="Terauchi R."/>
            <person name="Kusano T."/>
        </authorList>
    </citation>
    <scope>INDUCTION BY CUCUMBER MOSAIC VIRUS</scope>
</reference>
<keyword id="KW-0479">Metal-binding</keyword>
<keyword id="KW-0539">Nucleus</keyword>
<keyword id="KW-1185">Reference proteome</keyword>
<keyword id="KW-0677">Repeat</keyword>
<keyword id="KW-0678">Repressor</keyword>
<keyword id="KW-0804">Transcription</keyword>
<keyword id="KW-0805">Transcription regulation</keyword>
<keyword id="KW-0862">Zinc</keyword>
<keyword id="KW-0863">Zinc-finger</keyword>
<accession>Q42410</accession>
<accession>Q8LA47</accession>
<protein>
    <recommendedName>
        <fullName>Zinc finger protein ZAT12</fullName>
    </recommendedName>
    <alternativeName>
        <fullName>Protein RESPONSIVE TO HIGH LIGHT 41</fullName>
    </alternativeName>
</protein>
<comment type="function">
    <text evidence="2 4 5 6">Transcriptional repressor involved in light acclimation, cold and oxidative stress responses. May regulate a collection of transcripts involved in response to high-light, cold and oxidative stress.</text>
</comment>
<comment type="subcellular location">
    <subcellularLocation>
        <location evidence="10">Nucleus</location>
    </subcellularLocation>
</comment>
<comment type="tissue specificity">
    <text evidence="9">Expressed in roots, stems and flowers.</text>
</comment>
<comment type="induction">
    <text evidence="3 4 5 6 7 8">By H(2)O(2), cold, drought, cold or heat stresses, wounding, cucumber mosaic virus (CMV), exposure to high-intensity light and low-oxygen conditions in roots.</text>
</comment>
<comment type="disruption phenotype">
    <text evidence="4 6">No visible phenotype under normal growth condition, but enhanced tolerance to heat stress and increased sensitivity to salt stress.</text>
</comment>
<comment type="miscellaneous">
    <text>Plants overexpressing ZAT12 show thick and dark-green leaves with round shape, short petiole, elevated amounts of anthocyanins and enhanced tolerance to high-light irradiation and oxidative stress.</text>
</comment>
<name>ZAT12_ARATH</name>
<feature type="chain" id="PRO_0000409721" description="Zinc finger protein ZAT12">
    <location>
        <begin position="1"/>
        <end position="162"/>
    </location>
</feature>
<feature type="zinc finger region" description="C2H2-type 1" evidence="1">
    <location>
        <begin position="39"/>
        <end position="61"/>
    </location>
</feature>
<feature type="zinc finger region" description="C2H2-type 2" evidence="1">
    <location>
        <begin position="82"/>
        <end position="104"/>
    </location>
</feature>
<feature type="sequence conflict" description="In Ref. 5; AAM65582." evidence="10" ref="5">
    <original>G</original>
    <variation>R</variation>
    <location>
        <position position="72"/>
    </location>
</feature>
<proteinExistence type="evidence at transcript level"/>